<sequence>MPEKINYENLKPSEARQLIREGVLTGPTAGIALGYTQANLVMLPKELAYDFLLFAFRNPKPCPILDVTDVGSPEPKGVAKGADLRTDIPKYRIYKKGVLEAEVNDIRDYWRDDFVAFLLGCSFTFEKALLENDIPVRHIEEGKNVPMYITNIETRPAGIFHGYMVVSMRPIPQNLVVRAVQVTSRFPSVHGAPVHIGDPKAIGIASLDKPDFGDPVEIKAGEVPVFWACGVTPQAVAMKSKPEIMITHSPGHMFITDLKDEMLAC</sequence>
<accession>B0K189</accession>
<feature type="chain" id="PRO_0000379871" description="Putative hydro-lyase Teth514_1597">
    <location>
        <begin position="1"/>
        <end position="265"/>
    </location>
</feature>
<comment type="similarity">
    <text evidence="1">Belongs to the D-glutamate cyclase family.</text>
</comment>
<organism>
    <name type="scientific">Thermoanaerobacter sp. (strain X514)</name>
    <dbReference type="NCBI Taxonomy" id="399726"/>
    <lineage>
        <taxon>Bacteria</taxon>
        <taxon>Bacillati</taxon>
        <taxon>Bacillota</taxon>
        <taxon>Clostridia</taxon>
        <taxon>Thermoanaerobacterales</taxon>
        <taxon>Thermoanaerobacteraceae</taxon>
        <taxon>Thermoanaerobacter</taxon>
    </lineage>
</organism>
<gene>
    <name type="ordered locus">Teth514_1597</name>
</gene>
<reference key="1">
    <citation type="submission" date="2008-01" db="EMBL/GenBank/DDBJ databases">
        <title>Complete sequence of Thermoanaerobacter sp. X514.</title>
        <authorList>
            <consortium name="US DOE Joint Genome Institute"/>
            <person name="Copeland A."/>
            <person name="Lucas S."/>
            <person name="Lapidus A."/>
            <person name="Barry K."/>
            <person name="Glavina del Rio T."/>
            <person name="Dalin E."/>
            <person name="Tice H."/>
            <person name="Pitluck S."/>
            <person name="Bruce D."/>
            <person name="Goodwin L."/>
            <person name="Saunders E."/>
            <person name="Brettin T."/>
            <person name="Detter J.C."/>
            <person name="Han C."/>
            <person name="Schmutz J."/>
            <person name="Larimer F."/>
            <person name="Land M."/>
            <person name="Hauser L."/>
            <person name="Kyrpides N."/>
            <person name="Kim E."/>
            <person name="Hemme C."/>
            <person name="Fields M.W."/>
            <person name="He Z."/>
            <person name="Zhou J."/>
            <person name="Richardson P."/>
        </authorList>
    </citation>
    <scope>NUCLEOTIDE SEQUENCE [LARGE SCALE GENOMIC DNA]</scope>
    <source>
        <strain>X514</strain>
    </source>
</reference>
<dbReference type="EC" id="4.2.1.-" evidence="1"/>
<dbReference type="EMBL" id="CP000923">
    <property type="protein sequence ID" value="ABY92884.1"/>
    <property type="molecule type" value="Genomic_DNA"/>
</dbReference>
<dbReference type="RefSeq" id="WP_009052368.1">
    <property type="nucleotide sequence ID" value="NC_010320.1"/>
</dbReference>
<dbReference type="SMR" id="B0K189"/>
<dbReference type="KEGG" id="tex:Teth514_1597"/>
<dbReference type="HOGENOM" id="CLU_059759_0_0_9"/>
<dbReference type="Proteomes" id="UP000002155">
    <property type="component" value="Chromosome"/>
</dbReference>
<dbReference type="GO" id="GO:0016829">
    <property type="term" value="F:lyase activity"/>
    <property type="evidence" value="ECO:0007669"/>
    <property type="project" value="UniProtKB-KW"/>
</dbReference>
<dbReference type="FunFam" id="3.30.2040.10:FF:000001">
    <property type="entry name" value="D-glutamate cyclase, mitochondrial"/>
    <property type="match status" value="1"/>
</dbReference>
<dbReference type="Gene3D" id="3.40.1640.10">
    <property type="entry name" value="PSTPO5379-like"/>
    <property type="match status" value="1"/>
</dbReference>
<dbReference type="Gene3D" id="3.30.2040.10">
    <property type="entry name" value="PSTPO5379-like domain"/>
    <property type="match status" value="1"/>
</dbReference>
<dbReference type="HAMAP" id="MF_01830">
    <property type="entry name" value="Hydro_lyase"/>
    <property type="match status" value="1"/>
</dbReference>
<dbReference type="InterPro" id="IPR009906">
    <property type="entry name" value="D-Glu_cyclase"/>
</dbReference>
<dbReference type="InterPro" id="IPR038021">
    <property type="entry name" value="Putative_hydro-lyase"/>
</dbReference>
<dbReference type="InterPro" id="IPR016938">
    <property type="entry name" value="UPF0317"/>
</dbReference>
<dbReference type="NCBIfam" id="NF003969">
    <property type="entry name" value="PRK05463.1"/>
    <property type="match status" value="1"/>
</dbReference>
<dbReference type="PANTHER" id="PTHR32022">
    <property type="entry name" value="D-GLUTAMATE CYCLASE, MITOCHONDRIAL"/>
    <property type="match status" value="1"/>
</dbReference>
<dbReference type="PANTHER" id="PTHR32022:SF10">
    <property type="entry name" value="D-GLUTAMATE CYCLASE, MITOCHONDRIAL"/>
    <property type="match status" value="1"/>
</dbReference>
<dbReference type="Pfam" id="PF07286">
    <property type="entry name" value="D-Glu_cyclase"/>
    <property type="match status" value="1"/>
</dbReference>
<dbReference type="PIRSF" id="PIRSF029755">
    <property type="entry name" value="UCP029755"/>
    <property type="match status" value="1"/>
</dbReference>
<dbReference type="SUPFAM" id="SSF160920">
    <property type="entry name" value="PSTPO5379-like"/>
    <property type="match status" value="1"/>
</dbReference>
<proteinExistence type="inferred from homology"/>
<protein>
    <recommendedName>
        <fullName evidence="1">Putative hydro-lyase Teth514_1597</fullName>
        <ecNumber evidence="1">4.2.1.-</ecNumber>
    </recommendedName>
</protein>
<name>Y1597_THEPX</name>
<evidence type="ECO:0000255" key="1">
    <source>
        <dbReference type="HAMAP-Rule" id="MF_01830"/>
    </source>
</evidence>
<keyword id="KW-0456">Lyase</keyword>